<dbReference type="EMBL" id="AE010300">
    <property type="protein sequence ID" value="AAN49757.1"/>
    <property type="molecule type" value="Genomic_DNA"/>
</dbReference>
<dbReference type="RefSeq" id="NP_712739.1">
    <property type="nucleotide sequence ID" value="NC_004342.2"/>
</dbReference>
<dbReference type="RefSeq" id="WP_001085747.1">
    <property type="nucleotide sequence ID" value="NC_004342.2"/>
</dbReference>
<dbReference type="SMR" id="Q8F353"/>
<dbReference type="FunCoup" id="Q8F353">
    <property type="interactions" value="375"/>
</dbReference>
<dbReference type="STRING" id="189518.LA_2558"/>
<dbReference type="PaxDb" id="189518-LA_2558"/>
<dbReference type="EnsemblBacteria" id="AAN49757">
    <property type="protein sequence ID" value="AAN49757"/>
    <property type="gene ID" value="LA_2558"/>
</dbReference>
<dbReference type="GeneID" id="61144721"/>
<dbReference type="KEGG" id="lil:LA_2558"/>
<dbReference type="PATRIC" id="fig|189518.3.peg.2543"/>
<dbReference type="HOGENOM" id="CLU_014218_8_2_12"/>
<dbReference type="InParanoid" id="Q8F353"/>
<dbReference type="OrthoDB" id="9804062at2"/>
<dbReference type="Proteomes" id="UP000001408">
    <property type="component" value="Chromosome I"/>
</dbReference>
<dbReference type="GO" id="GO:0009376">
    <property type="term" value="C:HslUV protease complex"/>
    <property type="evidence" value="ECO:0000318"/>
    <property type="project" value="GO_Central"/>
</dbReference>
<dbReference type="GO" id="GO:0005524">
    <property type="term" value="F:ATP binding"/>
    <property type="evidence" value="ECO:0000318"/>
    <property type="project" value="GO_Central"/>
</dbReference>
<dbReference type="GO" id="GO:0016887">
    <property type="term" value="F:ATP hydrolysis activity"/>
    <property type="evidence" value="ECO:0000318"/>
    <property type="project" value="GO_Central"/>
</dbReference>
<dbReference type="GO" id="GO:0140662">
    <property type="term" value="F:ATP-dependent protein folding chaperone"/>
    <property type="evidence" value="ECO:0007669"/>
    <property type="project" value="InterPro"/>
</dbReference>
<dbReference type="GO" id="GO:0046983">
    <property type="term" value="F:protein dimerization activity"/>
    <property type="evidence" value="ECO:0007669"/>
    <property type="project" value="InterPro"/>
</dbReference>
<dbReference type="GO" id="GO:0051082">
    <property type="term" value="F:unfolded protein binding"/>
    <property type="evidence" value="ECO:0007669"/>
    <property type="project" value="UniProtKB-UniRule"/>
</dbReference>
<dbReference type="GO" id="GO:0008270">
    <property type="term" value="F:zinc ion binding"/>
    <property type="evidence" value="ECO:0007669"/>
    <property type="project" value="InterPro"/>
</dbReference>
<dbReference type="GO" id="GO:0051301">
    <property type="term" value="P:cell division"/>
    <property type="evidence" value="ECO:0000318"/>
    <property type="project" value="GO_Central"/>
</dbReference>
<dbReference type="GO" id="GO:0051603">
    <property type="term" value="P:proteolysis involved in protein catabolic process"/>
    <property type="evidence" value="ECO:0000318"/>
    <property type="project" value="GO_Central"/>
</dbReference>
<dbReference type="CDD" id="cd19497">
    <property type="entry name" value="RecA-like_ClpX"/>
    <property type="match status" value="1"/>
</dbReference>
<dbReference type="FunFam" id="1.10.8.60:FF:000002">
    <property type="entry name" value="ATP-dependent Clp protease ATP-binding subunit ClpX"/>
    <property type="match status" value="1"/>
</dbReference>
<dbReference type="FunFam" id="3.40.50.300:FF:000005">
    <property type="entry name" value="ATP-dependent Clp protease ATP-binding subunit ClpX"/>
    <property type="match status" value="1"/>
</dbReference>
<dbReference type="Gene3D" id="1.10.8.60">
    <property type="match status" value="1"/>
</dbReference>
<dbReference type="Gene3D" id="6.20.220.10">
    <property type="entry name" value="ClpX chaperone, C4-type zinc finger domain"/>
    <property type="match status" value="1"/>
</dbReference>
<dbReference type="Gene3D" id="3.40.50.300">
    <property type="entry name" value="P-loop containing nucleotide triphosphate hydrolases"/>
    <property type="match status" value="1"/>
</dbReference>
<dbReference type="HAMAP" id="MF_00175">
    <property type="entry name" value="ClpX"/>
    <property type="match status" value="1"/>
</dbReference>
<dbReference type="InterPro" id="IPR003593">
    <property type="entry name" value="AAA+_ATPase"/>
</dbReference>
<dbReference type="InterPro" id="IPR050052">
    <property type="entry name" value="ATP-dep_Clp_protease_ClpX"/>
</dbReference>
<dbReference type="InterPro" id="IPR003959">
    <property type="entry name" value="ATPase_AAA_core"/>
</dbReference>
<dbReference type="InterPro" id="IPR019489">
    <property type="entry name" value="Clp_ATPase_C"/>
</dbReference>
<dbReference type="InterPro" id="IPR004487">
    <property type="entry name" value="Clp_protease_ATP-bd_su_ClpX"/>
</dbReference>
<dbReference type="InterPro" id="IPR046425">
    <property type="entry name" value="ClpX_bact"/>
</dbReference>
<dbReference type="InterPro" id="IPR027417">
    <property type="entry name" value="P-loop_NTPase"/>
</dbReference>
<dbReference type="InterPro" id="IPR010603">
    <property type="entry name" value="Znf_CppX_C4"/>
</dbReference>
<dbReference type="InterPro" id="IPR038366">
    <property type="entry name" value="Znf_CppX_C4_sf"/>
</dbReference>
<dbReference type="NCBIfam" id="TIGR00382">
    <property type="entry name" value="clpX"/>
    <property type="match status" value="1"/>
</dbReference>
<dbReference type="NCBIfam" id="NF003745">
    <property type="entry name" value="PRK05342.1"/>
    <property type="match status" value="1"/>
</dbReference>
<dbReference type="PANTHER" id="PTHR48102:SF7">
    <property type="entry name" value="ATP-DEPENDENT CLP PROTEASE ATP-BINDING SUBUNIT CLPX-LIKE, MITOCHONDRIAL"/>
    <property type="match status" value="1"/>
</dbReference>
<dbReference type="PANTHER" id="PTHR48102">
    <property type="entry name" value="ATP-DEPENDENT CLP PROTEASE ATP-BINDING SUBUNIT CLPX-LIKE, MITOCHONDRIAL-RELATED"/>
    <property type="match status" value="1"/>
</dbReference>
<dbReference type="Pfam" id="PF07724">
    <property type="entry name" value="AAA_2"/>
    <property type="match status" value="1"/>
</dbReference>
<dbReference type="Pfam" id="PF10431">
    <property type="entry name" value="ClpB_D2-small"/>
    <property type="match status" value="1"/>
</dbReference>
<dbReference type="Pfam" id="PF06689">
    <property type="entry name" value="zf-C4_ClpX"/>
    <property type="match status" value="1"/>
</dbReference>
<dbReference type="SMART" id="SM00382">
    <property type="entry name" value="AAA"/>
    <property type="match status" value="1"/>
</dbReference>
<dbReference type="SMART" id="SM01086">
    <property type="entry name" value="ClpB_D2-small"/>
    <property type="match status" value="1"/>
</dbReference>
<dbReference type="SMART" id="SM00994">
    <property type="entry name" value="zf-C4_ClpX"/>
    <property type="match status" value="1"/>
</dbReference>
<dbReference type="SUPFAM" id="SSF57716">
    <property type="entry name" value="Glucocorticoid receptor-like (DNA-binding domain)"/>
    <property type="match status" value="1"/>
</dbReference>
<dbReference type="SUPFAM" id="SSF52540">
    <property type="entry name" value="P-loop containing nucleoside triphosphate hydrolases"/>
    <property type="match status" value="1"/>
</dbReference>
<dbReference type="PROSITE" id="PS51902">
    <property type="entry name" value="CLPX_ZB"/>
    <property type="match status" value="1"/>
</dbReference>
<evidence type="ECO:0000255" key="1">
    <source>
        <dbReference type="HAMAP-Rule" id="MF_00175"/>
    </source>
</evidence>
<evidence type="ECO:0000255" key="2">
    <source>
        <dbReference type="PROSITE-ProRule" id="PRU01250"/>
    </source>
</evidence>
<reference key="1">
    <citation type="journal article" date="2003" name="Nature">
        <title>Unique physiological and pathogenic features of Leptospira interrogans revealed by whole-genome sequencing.</title>
        <authorList>
            <person name="Ren S.-X."/>
            <person name="Fu G."/>
            <person name="Jiang X.-G."/>
            <person name="Zeng R."/>
            <person name="Miao Y.-G."/>
            <person name="Xu H."/>
            <person name="Zhang Y.-X."/>
            <person name="Xiong H."/>
            <person name="Lu G."/>
            <person name="Lu L.-F."/>
            <person name="Jiang H.-Q."/>
            <person name="Jia J."/>
            <person name="Tu Y.-F."/>
            <person name="Jiang J.-X."/>
            <person name="Gu W.-Y."/>
            <person name="Zhang Y.-Q."/>
            <person name="Cai Z."/>
            <person name="Sheng H.-H."/>
            <person name="Yin H.-F."/>
            <person name="Zhang Y."/>
            <person name="Zhu G.-F."/>
            <person name="Wan M."/>
            <person name="Huang H.-L."/>
            <person name="Qian Z."/>
            <person name="Wang S.-Y."/>
            <person name="Ma W."/>
            <person name="Yao Z.-J."/>
            <person name="Shen Y."/>
            <person name="Qiang B.-Q."/>
            <person name="Xia Q.-C."/>
            <person name="Guo X.-K."/>
            <person name="Danchin A."/>
            <person name="Saint Girons I."/>
            <person name="Somerville R.L."/>
            <person name="Wen Y.-M."/>
            <person name="Shi M.-H."/>
            <person name="Chen Z."/>
            <person name="Xu J.-G."/>
            <person name="Zhao G.-P."/>
        </authorList>
    </citation>
    <scope>NUCLEOTIDE SEQUENCE [LARGE SCALE GENOMIC DNA]</scope>
    <source>
        <strain>56601</strain>
    </source>
</reference>
<proteinExistence type="inferred from homology"/>
<comment type="function">
    <text evidence="1">ATP-dependent specificity component of the Clp protease. It directs the protease to specific substrates. Can perform chaperone functions in the absence of ClpP.</text>
</comment>
<comment type="subunit">
    <text evidence="1">Component of the ClpX-ClpP complex. Forms a hexameric ring that, in the presence of ATP, binds to fourteen ClpP subunits assembled into a disk-like structure with a central cavity, resembling the structure of eukaryotic proteasomes.</text>
</comment>
<comment type="similarity">
    <text evidence="1">Belongs to the ClpX chaperone family.</text>
</comment>
<keyword id="KW-0067">ATP-binding</keyword>
<keyword id="KW-0143">Chaperone</keyword>
<keyword id="KW-0479">Metal-binding</keyword>
<keyword id="KW-0547">Nucleotide-binding</keyword>
<keyword id="KW-1185">Reference proteome</keyword>
<keyword id="KW-0862">Zinc</keyword>
<gene>
    <name evidence="1" type="primary">clpX</name>
    <name type="ordered locus">LA_2558</name>
</gene>
<organism>
    <name type="scientific">Leptospira interrogans serogroup Icterohaemorrhagiae serovar Lai (strain 56601)</name>
    <dbReference type="NCBI Taxonomy" id="189518"/>
    <lineage>
        <taxon>Bacteria</taxon>
        <taxon>Pseudomonadati</taxon>
        <taxon>Spirochaetota</taxon>
        <taxon>Spirochaetia</taxon>
        <taxon>Leptospirales</taxon>
        <taxon>Leptospiraceae</taxon>
        <taxon>Leptospira</taxon>
    </lineage>
</organism>
<sequence>MAKKTPGNNGKQKLFCSFCGKEQDAVKRLVAGPGVYICDECISLCNEIIAEDHEHSHEKSEVFSEVPSPADIKSILDQYVIGQDHAKKALSVAVYNHYKRVNLKEKKSDVEIEKSNILLIGPTGSGKTLLAQTLARIIKVPFAIVDATALTEAGYVGEDVENIILKLIQNADNDIKKAEVGIIYIDEVDKIARKSDSASITRDVSGEGVQQALLKIIEGTVANVPPQGGRKHPHQEYLQVDTKNILFILGGAFVDLPNIIKSRTGIKTIGFGSEEQRIQSENKDVLMEQVIPEDLIKFGLIPEFIGRLPIVATLQELNVDMLRQIFREPKNSVLKQYTRLLELENVKLTFHDEAIDKIAELAIKRESGARGLRAIVENIMLDLMFDIPSRKDIEEVIITAEVIANRVAPTLILKKESKIA</sequence>
<feature type="chain" id="PRO_0000160377" description="ATP-dependent Clp protease ATP-binding subunit ClpX">
    <location>
        <begin position="1"/>
        <end position="420"/>
    </location>
</feature>
<feature type="domain" description="ClpX-type ZB" evidence="2">
    <location>
        <begin position="4"/>
        <end position="57"/>
    </location>
</feature>
<feature type="binding site" evidence="2">
    <location>
        <position position="16"/>
    </location>
    <ligand>
        <name>Zn(2+)</name>
        <dbReference type="ChEBI" id="CHEBI:29105"/>
    </ligand>
</feature>
<feature type="binding site" evidence="2">
    <location>
        <position position="19"/>
    </location>
    <ligand>
        <name>Zn(2+)</name>
        <dbReference type="ChEBI" id="CHEBI:29105"/>
    </ligand>
</feature>
<feature type="binding site" evidence="2">
    <location>
        <position position="38"/>
    </location>
    <ligand>
        <name>Zn(2+)</name>
        <dbReference type="ChEBI" id="CHEBI:29105"/>
    </ligand>
</feature>
<feature type="binding site" evidence="2">
    <location>
        <position position="41"/>
    </location>
    <ligand>
        <name>Zn(2+)</name>
        <dbReference type="ChEBI" id="CHEBI:29105"/>
    </ligand>
</feature>
<feature type="binding site" evidence="1">
    <location>
        <begin position="122"/>
        <end position="129"/>
    </location>
    <ligand>
        <name>ATP</name>
        <dbReference type="ChEBI" id="CHEBI:30616"/>
    </ligand>
</feature>
<accession>Q8F353</accession>
<name>CLPX_LEPIN</name>
<protein>
    <recommendedName>
        <fullName evidence="1">ATP-dependent Clp protease ATP-binding subunit ClpX</fullName>
    </recommendedName>
</protein>